<accession>Q15ZU4</accession>
<proteinExistence type="inferred from homology"/>
<gene>
    <name evidence="1" type="primary">tdh</name>
    <name type="ordered locus">Patl_0062</name>
</gene>
<organism>
    <name type="scientific">Pseudoalteromonas atlantica (strain T6c / ATCC BAA-1087)</name>
    <dbReference type="NCBI Taxonomy" id="3042615"/>
    <lineage>
        <taxon>Bacteria</taxon>
        <taxon>Pseudomonadati</taxon>
        <taxon>Pseudomonadota</taxon>
        <taxon>Gammaproteobacteria</taxon>
        <taxon>Alteromonadales</taxon>
        <taxon>Alteromonadaceae</taxon>
        <taxon>Paraglaciecola</taxon>
    </lineage>
</organism>
<keyword id="KW-0963">Cytoplasm</keyword>
<keyword id="KW-0479">Metal-binding</keyword>
<keyword id="KW-0520">NAD</keyword>
<keyword id="KW-0560">Oxidoreductase</keyword>
<keyword id="KW-0862">Zinc</keyword>
<sequence>MKSLAKLKSEKGIWLHDSEMPTVGHNDILIKIRKTAICGTDMHIYNWDEWSQNTIPVPMVVGHEYVGEVVEIGEEVRGFAIGDRVSGEGHITCGHCRNCRAGRRHLCRNTSGVGVNRAGAFAEYLSIPAFNAFKIPDNISDDLAAIFDPFGNAVHTALSFDLVGEDVLITGAGPIGIMAAAVAQHVGARHVVITDVNEYRLDLARKMGASRAVNVAKESLKDVMNDLGMSEGFDVGLEMSGVPAAFRDMLDKMNHGGKVAMLGIPSGDVAVDWNKVIFKGLVIKGIYGREMFETWYKMASLIQGGLNLAPIITHQFNIDEFQQGFDTMGSGQSGKVILNW</sequence>
<evidence type="ECO:0000255" key="1">
    <source>
        <dbReference type="HAMAP-Rule" id="MF_00627"/>
    </source>
</evidence>
<protein>
    <recommendedName>
        <fullName evidence="1">L-threonine 3-dehydrogenase</fullName>
        <shortName evidence="1">TDH</shortName>
        <ecNumber evidence="1">1.1.1.103</ecNumber>
    </recommendedName>
</protein>
<dbReference type="EC" id="1.1.1.103" evidence="1"/>
<dbReference type="EMBL" id="CP000388">
    <property type="protein sequence ID" value="ABG38594.1"/>
    <property type="molecule type" value="Genomic_DNA"/>
</dbReference>
<dbReference type="RefSeq" id="WP_011573005.1">
    <property type="nucleotide sequence ID" value="NC_008228.1"/>
</dbReference>
<dbReference type="SMR" id="Q15ZU4"/>
<dbReference type="STRING" id="342610.Patl_0062"/>
<dbReference type="KEGG" id="pat:Patl_0062"/>
<dbReference type="eggNOG" id="COG1063">
    <property type="taxonomic scope" value="Bacteria"/>
</dbReference>
<dbReference type="HOGENOM" id="CLU_026673_11_0_6"/>
<dbReference type="OrthoDB" id="9773078at2"/>
<dbReference type="UniPathway" id="UPA00046">
    <property type="reaction ID" value="UER00505"/>
</dbReference>
<dbReference type="Proteomes" id="UP000001981">
    <property type="component" value="Chromosome"/>
</dbReference>
<dbReference type="GO" id="GO:0005737">
    <property type="term" value="C:cytoplasm"/>
    <property type="evidence" value="ECO:0007669"/>
    <property type="project" value="UniProtKB-SubCell"/>
</dbReference>
<dbReference type="GO" id="GO:0008743">
    <property type="term" value="F:L-threonine 3-dehydrogenase activity"/>
    <property type="evidence" value="ECO:0007669"/>
    <property type="project" value="UniProtKB-UniRule"/>
</dbReference>
<dbReference type="GO" id="GO:0008270">
    <property type="term" value="F:zinc ion binding"/>
    <property type="evidence" value="ECO:0007669"/>
    <property type="project" value="UniProtKB-UniRule"/>
</dbReference>
<dbReference type="GO" id="GO:0019518">
    <property type="term" value="P:L-threonine catabolic process to glycine"/>
    <property type="evidence" value="ECO:0007669"/>
    <property type="project" value="UniProtKB-UniPathway"/>
</dbReference>
<dbReference type="Gene3D" id="3.90.180.10">
    <property type="entry name" value="Medium-chain alcohol dehydrogenases, catalytic domain"/>
    <property type="match status" value="1"/>
</dbReference>
<dbReference type="Gene3D" id="3.40.50.720">
    <property type="entry name" value="NAD(P)-binding Rossmann-like Domain"/>
    <property type="match status" value="1"/>
</dbReference>
<dbReference type="HAMAP" id="MF_00627">
    <property type="entry name" value="Thr_dehydrog"/>
    <property type="match status" value="1"/>
</dbReference>
<dbReference type="InterPro" id="IPR013149">
    <property type="entry name" value="ADH-like_C"/>
</dbReference>
<dbReference type="InterPro" id="IPR013154">
    <property type="entry name" value="ADH-like_N"/>
</dbReference>
<dbReference type="InterPro" id="IPR002328">
    <property type="entry name" value="ADH_Zn_CS"/>
</dbReference>
<dbReference type="InterPro" id="IPR011032">
    <property type="entry name" value="GroES-like_sf"/>
</dbReference>
<dbReference type="InterPro" id="IPR004627">
    <property type="entry name" value="L-Threonine_3-DHase"/>
</dbReference>
<dbReference type="InterPro" id="IPR036291">
    <property type="entry name" value="NAD(P)-bd_dom_sf"/>
</dbReference>
<dbReference type="InterPro" id="IPR020843">
    <property type="entry name" value="PKS_ER"/>
</dbReference>
<dbReference type="InterPro" id="IPR050129">
    <property type="entry name" value="Zn_alcohol_dh"/>
</dbReference>
<dbReference type="NCBIfam" id="NF003808">
    <property type="entry name" value="PRK05396.1"/>
    <property type="match status" value="1"/>
</dbReference>
<dbReference type="NCBIfam" id="TIGR00692">
    <property type="entry name" value="tdh"/>
    <property type="match status" value="1"/>
</dbReference>
<dbReference type="PANTHER" id="PTHR43401">
    <property type="entry name" value="L-THREONINE 3-DEHYDROGENASE"/>
    <property type="match status" value="1"/>
</dbReference>
<dbReference type="PANTHER" id="PTHR43401:SF2">
    <property type="entry name" value="L-THREONINE 3-DEHYDROGENASE"/>
    <property type="match status" value="1"/>
</dbReference>
<dbReference type="Pfam" id="PF08240">
    <property type="entry name" value="ADH_N"/>
    <property type="match status" value="1"/>
</dbReference>
<dbReference type="Pfam" id="PF00107">
    <property type="entry name" value="ADH_zinc_N"/>
    <property type="match status" value="1"/>
</dbReference>
<dbReference type="SMART" id="SM00829">
    <property type="entry name" value="PKS_ER"/>
    <property type="match status" value="1"/>
</dbReference>
<dbReference type="SUPFAM" id="SSF50129">
    <property type="entry name" value="GroES-like"/>
    <property type="match status" value="1"/>
</dbReference>
<dbReference type="SUPFAM" id="SSF51735">
    <property type="entry name" value="NAD(P)-binding Rossmann-fold domains"/>
    <property type="match status" value="1"/>
</dbReference>
<dbReference type="PROSITE" id="PS00059">
    <property type="entry name" value="ADH_ZINC"/>
    <property type="match status" value="1"/>
</dbReference>
<feature type="chain" id="PRO_1000051645" description="L-threonine 3-dehydrogenase">
    <location>
        <begin position="1"/>
        <end position="340"/>
    </location>
</feature>
<feature type="active site" description="Charge relay system" evidence="1">
    <location>
        <position position="40"/>
    </location>
</feature>
<feature type="active site" description="Charge relay system" evidence="1">
    <location>
        <position position="43"/>
    </location>
</feature>
<feature type="binding site" evidence="1">
    <location>
        <position position="38"/>
    </location>
    <ligand>
        <name>Zn(2+)</name>
        <dbReference type="ChEBI" id="CHEBI:29105"/>
        <label>1</label>
        <note>catalytic</note>
    </ligand>
</feature>
<feature type="binding site" evidence="1">
    <location>
        <position position="63"/>
    </location>
    <ligand>
        <name>Zn(2+)</name>
        <dbReference type="ChEBI" id="CHEBI:29105"/>
        <label>1</label>
        <note>catalytic</note>
    </ligand>
</feature>
<feature type="binding site" evidence="1">
    <location>
        <position position="64"/>
    </location>
    <ligand>
        <name>Zn(2+)</name>
        <dbReference type="ChEBI" id="CHEBI:29105"/>
        <label>1</label>
        <note>catalytic</note>
    </ligand>
</feature>
<feature type="binding site" evidence="1">
    <location>
        <position position="93"/>
    </location>
    <ligand>
        <name>Zn(2+)</name>
        <dbReference type="ChEBI" id="CHEBI:29105"/>
        <label>2</label>
    </ligand>
</feature>
<feature type="binding site" evidence="1">
    <location>
        <position position="96"/>
    </location>
    <ligand>
        <name>Zn(2+)</name>
        <dbReference type="ChEBI" id="CHEBI:29105"/>
        <label>2</label>
    </ligand>
</feature>
<feature type="binding site" evidence="1">
    <location>
        <position position="99"/>
    </location>
    <ligand>
        <name>Zn(2+)</name>
        <dbReference type="ChEBI" id="CHEBI:29105"/>
        <label>2</label>
    </ligand>
</feature>
<feature type="binding site" evidence="1">
    <location>
        <position position="107"/>
    </location>
    <ligand>
        <name>Zn(2+)</name>
        <dbReference type="ChEBI" id="CHEBI:29105"/>
        <label>2</label>
    </ligand>
</feature>
<feature type="binding site" evidence="1">
    <location>
        <position position="175"/>
    </location>
    <ligand>
        <name>NAD(+)</name>
        <dbReference type="ChEBI" id="CHEBI:57540"/>
    </ligand>
</feature>
<feature type="binding site" evidence="1">
    <location>
        <position position="195"/>
    </location>
    <ligand>
        <name>NAD(+)</name>
        <dbReference type="ChEBI" id="CHEBI:57540"/>
    </ligand>
</feature>
<feature type="binding site" evidence="1">
    <location>
        <position position="200"/>
    </location>
    <ligand>
        <name>NAD(+)</name>
        <dbReference type="ChEBI" id="CHEBI:57540"/>
    </ligand>
</feature>
<feature type="binding site" evidence="1">
    <location>
        <begin position="262"/>
        <end position="264"/>
    </location>
    <ligand>
        <name>NAD(+)</name>
        <dbReference type="ChEBI" id="CHEBI:57540"/>
    </ligand>
</feature>
<feature type="binding site" evidence="1">
    <location>
        <begin position="286"/>
        <end position="287"/>
    </location>
    <ligand>
        <name>NAD(+)</name>
        <dbReference type="ChEBI" id="CHEBI:57540"/>
    </ligand>
</feature>
<feature type="site" description="Important for catalytic activity for the proton relay mechanism but does not participate directly in the coordination of zinc atom" evidence="1">
    <location>
        <position position="148"/>
    </location>
</feature>
<comment type="function">
    <text evidence="1">Catalyzes the NAD(+)-dependent oxidation of L-threonine to 2-amino-3-ketobutyrate.</text>
</comment>
<comment type="catalytic activity">
    <reaction evidence="1">
        <text>L-threonine + NAD(+) = (2S)-2-amino-3-oxobutanoate + NADH + H(+)</text>
        <dbReference type="Rhea" id="RHEA:13161"/>
        <dbReference type="ChEBI" id="CHEBI:15378"/>
        <dbReference type="ChEBI" id="CHEBI:57540"/>
        <dbReference type="ChEBI" id="CHEBI:57926"/>
        <dbReference type="ChEBI" id="CHEBI:57945"/>
        <dbReference type="ChEBI" id="CHEBI:78948"/>
        <dbReference type="EC" id="1.1.1.103"/>
    </reaction>
</comment>
<comment type="cofactor">
    <cofactor evidence="1">
        <name>Zn(2+)</name>
        <dbReference type="ChEBI" id="CHEBI:29105"/>
    </cofactor>
    <text evidence="1">Binds 2 Zn(2+) ions per subunit.</text>
</comment>
<comment type="pathway">
    <text evidence="1">Amino-acid degradation; L-threonine degradation via oxydo-reductase pathway; glycine from L-threonine: step 1/2.</text>
</comment>
<comment type="subunit">
    <text evidence="1">Homotetramer.</text>
</comment>
<comment type="subcellular location">
    <subcellularLocation>
        <location evidence="1">Cytoplasm</location>
    </subcellularLocation>
</comment>
<comment type="similarity">
    <text evidence="1">Belongs to the zinc-containing alcohol dehydrogenase family.</text>
</comment>
<reference key="1">
    <citation type="submission" date="2006-06" db="EMBL/GenBank/DDBJ databases">
        <title>Complete sequence of Pseudoalteromonas atlantica T6c.</title>
        <authorList>
            <consortium name="US DOE Joint Genome Institute"/>
            <person name="Copeland A."/>
            <person name="Lucas S."/>
            <person name="Lapidus A."/>
            <person name="Barry K."/>
            <person name="Detter J.C."/>
            <person name="Glavina del Rio T."/>
            <person name="Hammon N."/>
            <person name="Israni S."/>
            <person name="Dalin E."/>
            <person name="Tice H."/>
            <person name="Pitluck S."/>
            <person name="Saunders E."/>
            <person name="Brettin T."/>
            <person name="Bruce D."/>
            <person name="Han C."/>
            <person name="Tapia R."/>
            <person name="Gilna P."/>
            <person name="Schmutz J."/>
            <person name="Larimer F."/>
            <person name="Land M."/>
            <person name="Hauser L."/>
            <person name="Kyrpides N."/>
            <person name="Kim E."/>
            <person name="Karls A.C."/>
            <person name="Bartlett D."/>
            <person name="Higgins B.P."/>
            <person name="Richardson P."/>
        </authorList>
    </citation>
    <scope>NUCLEOTIDE SEQUENCE [LARGE SCALE GENOMIC DNA]</scope>
    <source>
        <strain>T6c / ATCC BAA-1087</strain>
    </source>
</reference>
<name>TDH_PSEA6</name>